<sequence length="522" mass="59044">MASGGGGCSASERLPPPFPGMDPESEGAAGGSEPEAGDSDTEGEDIFTGAAAASKPQSPKKTTSLFPIKNGSKENGIHEEQDQEPQDLFADATVELSLDSTQNNQKTMPGKTLIPHPTQEATNSPKPQPSYEELEEEEQEDQFDLTVGITDPEKIGDGMNAYVAYKVTTQTSLPMFRSRQFAVKRRFSDFLGLYEKLSEKHSQNGFIVPPPPEKSLIGMTKVKVGKEDSSSAEFLEKRRAALERYLQRIVNHPTMLQDPDVREFLEKEELPRAVGTQALSGAGLLKMFNKATDAVSKMTIKMNESDIWFEEKLQEVECEEQRLRKLHAVVETLVNHRKELALNTALFAKSLAMLGSSEDNTALSRALSQLAEVEEKIEQLHQEQANNDFFLLAELLSDYIRLLAIVRAAFDQRMKTWQRWQDAQATLQKKRESEARLLWANKPDKLQQAKDEITEWESRVTQYERDFERISTVVRKEVTRFEKEKSKDFKNHVIKYLETLLHSQQQLAKYWEAFLPEARAIS</sequence>
<organism>
    <name type="scientific">Rattus norvegicus</name>
    <name type="common">Rat</name>
    <dbReference type="NCBI Taxonomy" id="10116"/>
    <lineage>
        <taxon>Eukaryota</taxon>
        <taxon>Metazoa</taxon>
        <taxon>Chordata</taxon>
        <taxon>Craniata</taxon>
        <taxon>Vertebrata</taxon>
        <taxon>Euteleostomi</taxon>
        <taxon>Mammalia</taxon>
        <taxon>Eutheria</taxon>
        <taxon>Euarchontoglires</taxon>
        <taxon>Glires</taxon>
        <taxon>Rodentia</taxon>
        <taxon>Myomorpha</taxon>
        <taxon>Muroidea</taxon>
        <taxon>Muridae</taxon>
        <taxon>Murinae</taxon>
        <taxon>Rattus</taxon>
    </lineage>
</organism>
<protein>
    <recommendedName>
        <fullName>Sorting nexin-1</fullName>
    </recommendedName>
</protein>
<feature type="chain" id="PRO_0000213837" description="Sorting nexin-1">
    <location>
        <begin position="1"/>
        <end position="522"/>
    </location>
</feature>
<feature type="domain" description="PX" evidence="4">
    <location>
        <begin position="143"/>
        <end position="272"/>
    </location>
</feature>
<feature type="domain" description="BAR">
    <location>
        <begin position="302"/>
        <end position="522"/>
    </location>
</feature>
<feature type="region of interest" description="Disordered" evidence="5">
    <location>
        <begin position="1"/>
        <end position="142"/>
    </location>
</feature>
<feature type="region of interest" description="Membrane-binding amphipathic helix" evidence="1">
    <location>
        <begin position="281"/>
        <end position="298"/>
    </location>
</feature>
<feature type="compositionally biased region" description="Acidic residues" evidence="5">
    <location>
        <begin position="35"/>
        <end position="45"/>
    </location>
</feature>
<feature type="compositionally biased region" description="Polar residues" evidence="5">
    <location>
        <begin position="55"/>
        <end position="65"/>
    </location>
</feature>
<feature type="compositionally biased region" description="Basic and acidic residues" evidence="5">
    <location>
        <begin position="71"/>
        <end position="80"/>
    </location>
</feature>
<feature type="compositionally biased region" description="Polar residues" evidence="5">
    <location>
        <begin position="98"/>
        <end position="107"/>
    </location>
</feature>
<feature type="compositionally biased region" description="Acidic residues" evidence="5">
    <location>
        <begin position="132"/>
        <end position="142"/>
    </location>
</feature>
<feature type="binding site" evidence="2">
    <location>
        <position position="186"/>
    </location>
    <ligand>
        <name>a 1,2-diacyl-sn-glycero-3-phospho-(1D-myo-inositol-3-phosphate)</name>
        <dbReference type="ChEBI" id="CHEBI:58088"/>
    </ligand>
</feature>
<feature type="binding site" evidence="2">
    <location>
        <position position="188"/>
    </location>
    <ligand>
        <name>a 1,2-diacyl-sn-glycero-3-phospho-(1D-myo-inositol-3-phosphate)</name>
        <dbReference type="ChEBI" id="CHEBI:58088"/>
    </ligand>
</feature>
<feature type="binding site" evidence="2">
    <location>
        <position position="214"/>
    </location>
    <ligand>
        <name>a 1,2-diacyl-sn-glycero-3-phospho-(1D-myo-inositol-3-phosphate)</name>
        <dbReference type="ChEBI" id="CHEBI:58088"/>
    </ligand>
</feature>
<feature type="binding site" evidence="2">
    <location>
        <position position="238"/>
    </location>
    <ligand>
        <name>a 1,2-diacyl-sn-glycero-3-phospho-(1D-myo-inositol-3-phosphate)</name>
        <dbReference type="ChEBI" id="CHEBI:58088"/>
    </ligand>
</feature>
<feature type="modified residue" description="Phosphoserine" evidence="7">
    <location>
        <position position="32"/>
    </location>
</feature>
<feature type="modified residue" description="Phosphoserine" evidence="1">
    <location>
        <position position="39"/>
    </location>
</feature>
<feature type="modified residue" description="Phosphothreonine" evidence="3">
    <location>
        <position position="41"/>
    </location>
</feature>
<feature type="modified residue" description="Phosphothreonine" evidence="1">
    <location>
        <position position="48"/>
    </location>
</feature>
<feature type="modified residue" description="Phosphoserine" evidence="3">
    <location>
        <position position="58"/>
    </location>
</feature>
<feature type="modified residue" description="Phosphoserine" evidence="1">
    <location>
        <position position="72"/>
    </location>
</feature>
<feature type="modified residue" description="Phosphoserine" evidence="7">
    <location>
        <position position="188"/>
    </location>
</feature>
<feature type="modified residue" description="N6-acetyllysine" evidence="1">
    <location>
        <position position="237"/>
    </location>
</feature>
<feature type="modified residue" description="Phosphoserine" evidence="1">
    <location>
        <position position="280"/>
    </location>
</feature>
<accession>Q99N27</accession>
<accession>Q56A25</accession>
<comment type="function">
    <text evidence="1">Involved in several stages of intracellular trafficking. Interacts with membranes containing phosphatidylinositol 3-phosphate (PtdIns(3P)) or phosphatidylinositol 3,5-bisphosphate (PtdIns(3,5)P2). Acts in part as component of the retromer membrane-deforming SNX-BAR subcomplex. The SNX-BAR retromer mediates retrograde transport of cargo proteins from endosomes to the trans-Golgi network (TGN) and is involved in endosome-to-plasma membrane transport for cargo protein recycling. The SNX-BAR subcomplex functions to deform the donor membrane into a tubular profile called endosome-to-TGN transport carrier (ETC). Can sense membrane curvature and has in vitro vesicle-to-membrane remodeling activity. Involved in retrograde endosome-to-TGN transport of lysosomal enzyme receptors (IGF2R, M6PR and SORT1). Plays a role in targeting ligand-activated EGFR to the lysosomes for degradation after endocytosis from the cell surface and release from the Golgi. Involvement in retromer-independent endocytic trafficking of P2RY1 and lysosomal degradation of protease-activated receptor-1/F2R. Promotes KALRN- and RHOG-dependent but retromer-independent membrane remodeling such as lamellipodium formation; the function is dependent on GEF activity of KALRN. Required for endocytosis of DRD5 upon agonist stimulation but not for basal receptor trafficking (By similarity).</text>
</comment>
<comment type="subunit">
    <text evidence="1">Predominantly forms heterodimers with BAR domain-containing sorting nexins SNX5, SNX6 and SNX32; can self-associate to form homodimers. The heterodimers are proposed to self-assemble into helical arrays on the membrane to stabilize and expand local membrane curvature underlying endosomal tubule formation. Thought to be a component of the originally described retromer complex (also called SNX-BAR retromer) which is a pentamer containing the heterotrimeric retromer cargo-selective complex (CSC), also described as vacuolar protein sorting subcomplex (VPS) and a heterodimeric membrane-deforming subcomplex formed between SNX1 or SNX2 and SNX5 or SNX6 (also called SNX-BAR subcomplex); the respective CSC and SNX-BAR subcomplexes associate with low affinity. Interacts with SNX5, SNX6, SNX32, VPS26A, VPS29, VPS35, DRD5, DENND5A, KALRN, RHOG (GDP-bound form). The interaction with SNX2 is reported controversially. Interacts with DNAJC13; prevented by presence of HGS (By similarity). Interacts with HGS (PubMed:11110793).</text>
</comment>
<comment type="subcellular location">
    <subcellularLocation>
        <location evidence="1">Endosome membrane</location>
        <topology>Peripheral membrane protein</topology>
        <orientation>Cytoplasmic side</orientation>
    </subcellularLocation>
    <subcellularLocation>
        <location evidence="6">Golgi apparatus</location>
        <location evidence="6">trans-Golgi network membrane</location>
        <topology evidence="6">Peripheral membrane protein</topology>
        <orientation evidence="6">Cytoplasmic side</orientation>
    </subcellularLocation>
    <subcellularLocation>
        <location>Early endosome membrane</location>
        <topology>Peripheral membrane protein</topology>
        <orientation>Cytoplasmic side</orientation>
    </subcellularLocation>
    <subcellularLocation>
        <location evidence="1">Cell projection</location>
        <location evidence="1">Lamellipodium</location>
    </subcellularLocation>
    <text evidence="1">Enriched on tubular elements of the early endosome membrane. Binds preferentially to highly curved membranes enriched in phosphatidylinositol 3-phosphate (PtdIns(3P)) or phosphatidylinositol 3,5-bisphosphate (PtdIns(3,5)P2). Colocalized with SORT1 to tubular endosomal membrane structures called endosome-to-TGN transport carriers (ETCs) which are budding from early endosome vacuoles just before maturing into late endosome vacuoles. Colocalized with F-actin at the leading edge of lamellipodia in a KALRN-dependent manner.</text>
</comment>
<comment type="domain">
    <text evidence="1">The BAR domain is able to sense membrane curvature upon dimerization. Membrane remodeling seems to implicate insertion of a N-terminal amphipathic helix (AH) in the membrane (By similarity).</text>
</comment>
<comment type="miscellaneous">
    <text evidence="1">Binds phosphatidylinositol 3-phosphate (PtdIns-(3)P) and phosphatidylinositol 3,5-bisphosphate (PtdIns-(3,5)P2) in liposome-based assays. Can bind PtdIns(3,4,5)P3 in protein:lipid overlay assays, but not in liposome-based assays (By similarity).</text>
</comment>
<comment type="similarity">
    <text evidence="6">Belongs to the sorting nexin family.</text>
</comment>
<proteinExistence type="evidence at protein level"/>
<gene>
    <name type="primary">Snx1</name>
</gene>
<name>SNX1_RAT</name>
<reference key="1">
    <citation type="journal article" date="2001" name="J. Biol. Chem.">
        <title>Hrs interacts with sorting nexin 1 and regulates degradation of epidermal growth factor receptor.</title>
        <authorList>
            <person name="Chin L.-S."/>
            <person name="Raynor M.C."/>
            <person name="Wei X."/>
            <person name="Chen H.-Q."/>
            <person name="Li L."/>
        </authorList>
    </citation>
    <scope>NUCLEOTIDE SEQUENCE [MRNA]</scope>
    <scope>INTERACTION WITH HGS</scope>
</reference>
<reference key="2">
    <citation type="journal article" date="2004" name="Genome Res.">
        <title>The status, quality, and expansion of the NIH full-length cDNA project: the Mammalian Gene Collection (MGC).</title>
        <authorList>
            <consortium name="The MGC Project Team"/>
        </authorList>
    </citation>
    <scope>NUCLEOTIDE SEQUENCE [LARGE SCALE MRNA]</scope>
    <source>
        <tissue>Ovary</tissue>
    </source>
</reference>
<reference key="3">
    <citation type="journal article" date="2012" name="Nat. Commun.">
        <title>Quantitative maps of protein phosphorylation sites across 14 different rat organs and tissues.</title>
        <authorList>
            <person name="Lundby A."/>
            <person name="Secher A."/>
            <person name="Lage K."/>
            <person name="Nordsborg N.B."/>
            <person name="Dmytriyev A."/>
            <person name="Lundby C."/>
            <person name="Olsen J.V."/>
        </authorList>
    </citation>
    <scope>PHOSPHORYLATION [LARGE SCALE ANALYSIS] AT SER-32 AND SER-188</scope>
    <scope>IDENTIFICATION BY MASS SPECTROMETRY [LARGE SCALE ANALYSIS]</scope>
</reference>
<dbReference type="EMBL" id="AF218916">
    <property type="protein sequence ID" value="AAG59616.1"/>
    <property type="molecule type" value="mRNA"/>
</dbReference>
<dbReference type="EMBL" id="BC092201">
    <property type="protein sequence ID" value="AAH92201.1"/>
    <property type="molecule type" value="mRNA"/>
</dbReference>
<dbReference type="RefSeq" id="NP_445863.1">
    <property type="nucleotide sequence ID" value="NM_053411.1"/>
</dbReference>
<dbReference type="BMRB" id="Q99N27"/>
<dbReference type="SMR" id="Q99N27"/>
<dbReference type="BioGRID" id="249971">
    <property type="interactions" value="1"/>
</dbReference>
<dbReference type="FunCoup" id="Q99N27">
    <property type="interactions" value="3937"/>
</dbReference>
<dbReference type="IntAct" id="Q99N27">
    <property type="interactions" value="1"/>
</dbReference>
<dbReference type="STRING" id="10116.ENSRNOP00000022960"/>
<dbReference type="iPTMnet" id="Q99N27"/>
<dbReference type="PhosphoSitePlus" id="Q99N27"/>
<dbReference type="jPOST" id="Q99N27"/>
<dbReference type="PaxDb" id="10116-ENSRNOP00000022960"/>
<dbReference type="GeneID" id="84471"/>
<dbReference type="KEGG" id="rno:84471"/>
<dbReference type="UCSC" id="RGD:68935">
    <property type="organism name" value="rat"/>
</dbReference>
<dbReference type="AGR" id="RGD:68935"/>
<dbReference type="CTD" id="6642"/>
<dbReference type="RGD" id="68935">
    <property type="gene designation" value="Snx1"/>
</dbReference>
<dbReference type="VEuPathDB" id="HostDB:ENSRNOG00000017029"/>
<dbReference type="eggNOG" id="KOG2273">
    <property type="taxonomic scope" value="Eukaryota"/>
</dbReference>
<dbReference type="HOGENOM" id="CLU_022783_2_0_1"/>
<dbReference type="InParanoid" id="Q99N27"/>
<dbReference type="OrthoDB" id="271164at2759"/>
<dbReference type="PhylomeDB" id="Q99N27"/>
<dbReference type="TreeFam" id="TF313698"/>
<dbReference type="PRO" id="PR:Q99N27"/>
<dbReference type="Proteomes" id="UP000002494">
    <property type="component" value="Chromosome 8"/>
</dbReference>
<dbReference type="Bgee" id="ENSRNOG00000017029">
    <property type="expression patterns" value="Expressed in spleen and 19 other cell types or tissues"/>
</dbReference>
<dbReference type="GO" id="GO:0005737">
    <property type="term" value="C:cytoplasm"/>
    <property type="evidence" value="ECO:0000266"/>
    <property type="project" value="RGD"/>
</dbReference>
<dbReference type="GO" id="GO:0005829">
    <property type="term" value="C:cytosol"/>
    <property type="evidence" value="ECO:0007669"/>
    <property type="project" value="GOC"/>
</dbReference>
<dbReference type="GO" id="GO:0043197">
    <property type="term" value="C:dendritic spine"/>
    <property type="evidence" value="ECO:0000266"/>
    <property type="project" value="RGD"/>
</dbReference>
<dbReference type="GO" id="GO:0005769">
    <property type="term" value="C:early endosome"/>
    <property type="evidence" value="ECO:0000314"/>
    <property type="project" value="RGD"/>
</dbReference>
<dbReference type="GO" id="GO:0031901">
    <property type="term" value="C:early endosome membrane"/>
    <property type="evidence" value="ECO:0000266"/>
    <property type="project" value="RGD"/>
</dbReference>
<dbReference type="GO" id="GO:0005768">
    <property type="term" value="C:endosome"/>
    <property type="evidence" value="ECO:0000266"/>
    <property type="project" value="RGD"/>
</dbReference>
<dbReference type="GO" id="GO:0010008">
    <property type="term" value="C:endosome membrane"/>
    <property type="evidence" value="ECO:0000250"/>
    <property type="project" value="UniProtKB"/>
</dbReference>
<dbReference type="GO" id="GO:0098999">
    <property type="term" value="C:extrinsic component of postsynaptic endosome membrane"/>
    <property type="evidence" value="ECO:0000266"/>
    <property type="project" value="RGD"/>
</dbReference>
<dbReference type="GO" id="GO:0005794">
    <property type="term" value="C:Golgi apparatus"/>
    <property type="evidence" value="ECO:0007669"/>
    <property type="project" value="UniProtKB-SubCell"/>
</dbReference>
<dbReference type="GO" id="GO:0030027">
    <property type="term" value="C:lamellipodium"/>
    <property type="evidence" value="ECO:0007669"/>
    <property type="project" value="UniProtKB-SubCell"/>
</dbReference>
<dbReference type="GO" id="GO:0005764">
    <property type="term" value="C:lysosome"/>
    <property type="evidence" value="ECO:0007669"/>
    <property type="project" value="Ensembl"/>
</dbReference>
<dbReference type="GO" id="GO:0016020">
    <property type="term" value="C:membrane"/>
    <property type="evidence" value="ECO:0000266"/>
    <property type="project" value="RGD"/>
</dbReference>
<dbReference type="GO" id="GO:0048471">
    <property type="term" value="C:perinuclear region of cytoplasm"/>
    <property type="evidence" value="ECO:0000266"/>
    <property type="project" value="RGD"/>
</dbReference>
<dbReference type="GO" id="GO:0014069">
    <property type="term" value="C:postsynaptic density"/>
    <property type="evidence" value="ECO:0000266"/>
    <property type="project" value="RGD"/>
</dbReference>
<dbReference type="GO" id="GO:0099092">
    <property type="term" value="C:postsynaptic density, intracellular component"/>
    <property type="evidence" value="ECO:0000266"/>
    <property type="project" value="RGD"/>
</dbReference>
<dbReference type="GO" id="GO:0098793">
    <property type="term" value="C:presynapse"/>
    <property type="evidence" value="ECO:0000266"/>
    <property type="project" value="RGD"/>
</dbReference>
<dbReference type="GO" id="GO:0032991">
    <property type="term" value="C:protein-containing complex"/>
    <property type="evidence" value="ECO:0000266"/>
    <property type="project" value="RGD"/>
</dbReference>
<dbReference type="GO" id="GO:0030904">
    <property type="term" value="C:retromer complex"/>
    <property type="evidence" value="ECO:0000266"/>
    <property type="project" value="RGD"/>
</dbReference>
<dbReference type="GO" id="GO:0030905">
    <property type="term" value="C:retromer, tubulation complex"/>
    <property type="evidence" value="ECO:0000266"/>
    <property type="project" value="RGD"/>
</dbReference>
<dbReference type="GO" id="GO:0031982">
    <property type="term" value="C:vesicle"/>
    <property type="evidence" value="ECO:0000266"/>
    <property type="project" value="RGD"/>
</dbReference>
<dbReference type="GO" id="GO:0005154">
    <property type="term" value="F:epidermal growth factor receptor binding"/>
    <property type="evidence" value="ECO:0000266"/>
    <property type="project" value="RGD"/>
</dbReference>
<dbReference type="GO" id="GO:0042802">
    <property type="term" value="F:identical protein binding"/>
    <property type="evidence" value="ECO:0000266"/>
    <property type="project" value="RGD"/>
</dbReference>
<dbReference type="GO" id="GO:0005158">
    <property type="term" value="F:insulin receptor binding"/>
    <property type="evidence" value="ECO:0000266"/>
    <property type="project" value="RGD"/>
</dbReference>
<dbReference type="GO" id="GO:1990460">
    <property type="term" value="F:leptin receptor binding"/>
    <property type="evidence" value="ECO:0000266"/>
    <property type="project" value="RGD"/>
</dbReference>
<dbReference type="GO" id="GO:0035091">
    <property type="term" value="F:phosphatidylinositol binding"/>
    <property type="evidence" value="ECO:0000250"/>
    <property type="project" value="UniProtKB"/>
</dbReference>
<dbReference type="GO" id="GO:0046982">
    <property type="term" value="F:protein heterodimerization activity"/>
    <property type="evidence" value="ECO:0000266"/>
    <property type="project" value="RGD"/>
</dbReference>
<dbReference type="GO" id="GO:0042803">
    <property type="term" value="F:protein homodimerization activity"/>
    <property type="evidence" value="ECO:0000266"/>
    <property type="project" value="RGD"/>
</dbReference>
<dbReference type="GO" id="GO:1990459">
    <property type="term" value="F:transferrin receptor binding"/>
    <property type="evidence" value="ECO:0000266"/>
    <property type="project" value="RGD"/>
</dbReference>
<dbReference type="GO" id="GO:0034498">
    <property type="term" value="P:early endosome to Golgi transport"/>
    <property type="evidence" value="ECO:0000266"/>
    <property type="project" value="RGD"/>
</dbReference>
<dbReference type="GO" id="GO:0016197">
    <property type="term" value="P:endosomal transport"/>
    <property type="evidence" value="ECO:0000270"/>
    <property type="project" value="RGD"/>
</dbReference>
<dbReference type="GO" id="GO:0006886">
    <property type="term" value="P:intracellular protein transport"/>
    <property type="evidence" value="ECO:0000266"/>
    <property type="project" value="RGD"/>
</dbReference>
<dbReference type="GO" id="GO:0072673">
    <property type="term" value="P:lamellipodium morphogenesis"/>
    <property type="evidence" value="ECO:0000250"/>
    <property type="project" value="UniProtKB"/>
</dbReference>
<dbReference type="GO" id="GO:0030512">
    <property type="term" value="P:negative regulation of transforming growth factor beta receptor signaling pathway"/>
    <property type="evidence" value="ECO:0000266"/>
    <property type="project" value="RGD"/>
</dbReference>
<dbReference type="GO" id="GO:0031175">
    <property type="term" value="P:neuron projection development"/>
    <property type="evidence" value="ECO:0000266"/>
    <property type="project" value="RGD"/>
</dbReference>
<dbReference type="GO" id="GO:0045732">
    <property type="term" value="P:positive regulation of protein catabolic process"/>
    <property type="evidence" value="ECO:0000315"/>
    <property type="project" value="RGD"/>
</dbReference>
<dbReference type="GO" id="GO:0031623">
    <property type="term" value="P:receptor internalization"/>
    <property type="evidence" value="ECO:0000250"/>
    <property type="project" value="UniProtKB"/>
</dbReference>
<dbReference type="GO" id="GO:0042147">
    <property type="term" value="P:retrograde transport, endosome to Golgi"/>
    <property type="evidence" value="ECO:0000250"/>
    <property type="project" value="UniProtKB"/>
</dbReference>
<dbReference type="CDD" id="cd07665">
    <property type="entry name" value="BAR_SNX1"/>
    <property type="match status" value="1"/>
</dbReference>
<dbReference type="CDD" id="cd07281">
    <property type="entry name" value="PX_SNX1"/>
    <property type="match status" value="1"/>
</dbReference>
<dbReference type="FunFam" id="3.30.1520.10:FF:000015">
    <property type="entry name" value="Sorting nexin 1"/>
    <property type="match status" value="1"/>
</dbReference>
<dbReference type="FunFam" id="1.20.1270.60:FF:000012">
    <property type="entry name" value="Sorting nexin 2"/>
    <property type="match status" value="1"/>
</dbReference>
<dbReference type="Gene3D" id="1.20.1270.60">
    <property type="entry name" value="Arfaptin homology (AH) domain/BAR domain"/>
    <property type="match status" value="1"/>
</dbReference>
<dbReference type="Gene3D" id="3.30.1520.10">
    <property type="entry name" value="Phox-like domain"/>
    <property type="match status" value="1"/>
</dbReference>
<dbReference type="InterPro" id="IPR027267">
    <property type="entry name" value="AH/BAR_dom_sf"/>
</dbReference>
<dbReference type="InterPro" id="IPR001683">
    <property type="entry name" value="PX_dom"/>
</dbReference>
<dbReference type="InterPro" id="IPR036871">
    <property type="entry name" value="PX_dom_sf"/>
</dbReference>
<dbReference type="InterPro" id="IPR034901">
    <property type="entry name" value="PX_SNX1"/>
</dbReference>
<dbReference type="InterPro" id="IPR028660">
    <property type="entry name" value="SNX1_BAR"/>
</dbReference>
<dbReference type="InterPro" id="IPR005329">
    <property type="entry name" value="Sorting_nexin_N"/>
</dbReference>
<dbReference type="InterPro" id="IPR015404">
    <property type="entry name" value="Vps5_C"/>
</dbReference>
<dbReference type="PANTHER" id="PTHR10555">
    <property type="entry name" value="SORTING NEXIN"/>
    <property type="match status" value="1"/>
</dbReference>
<dbReference type="PANTHER" id="PTHR10555:SF129">
    <property type="entry name" value="SORTING NEXIN-1"/>
    <property type="match status" value="1"/>
</dbReference>
<dbReference type="Pfam" id="PF00787">
    <property type="entry name" value="PX"/>
    <property type="match status" value="1"/>
</dbReference>
<dbReference type="Pfam" id="PF03700">
    <property type="entry name" value="Sorting_nexin"/>
    <property type="match status" value="1"/>
</dbReference>
<dbReference type="Pfam" id="PF09325">
    <property type="entry name" value="Vps5"/>
    <property type="match status" value="1"/>
</dbReference>
<dbReference type="SMART" id="SM00312">
    <property type="entry name" value="PX"/>
    <property type="match status" value="1"/>
</dbReference>
<dbReference type="SUPFAM" id="SSF103657">
    <property type="entry name" value="BAR/IMD domain-like"/>
    <property type="match status" value="1"/>
</dbReference>
<dbReference type="SUPFAM" id="SSF64268">
    <property type="entry name" value="PX domain"/>
    <property type="match status" value="1"/>
</dbReference>
<dbReference type="PROSITE" id="PS50195">
    <property type="entry name" value="PX"/>
    <property type="match status" value="1"/>
</dbReference>
<evidence type="ECO:0000250" key="1">
    <source>
        <dbReference type="UniProtKB" id="Q13596"/>
    </source>
</evidence>
<evidence type="ECO:0000250" key="2">
    <source>
        <dbReference type="UniProtKB" id="Q96L94"/>
    </source>
</evidence>
<evidence type="ECO:0000250" key="3">
    <source>
        <dbReference type="UniProtKB" id="Q9WV80"/>
    </source>
</evidence>
<evidence type="ECO:0000255" key="4">
    <source>
        <dbReference type="PROSITE-ProRule" id="PRU00147"/>
    </source>
</evidence>
<evidence type="ECO:0000256" key="5">
    <source>
        <dbReference type="SAM" id="MobiDB-lite"/>
    </source>
</evidence>
<evidence type="ECO:0000305" key="6"/>
<evidence type="ECO:0007744" key="7">
    <source>
    </source>
</evidence>
<keyword id="KW-0007">Acetylation</keyword>
<keyword id="KW-0966">Cell projection</keyword>
<keyword id="KW-0967">Endosome</keyword>
<keyword id="KW-0333">Golgi apparatus</keyword>
<keyword id="KW-0446">Lipid-binding</keyword>
<keyword id="KW-0472">Membrane</keyword>
<keyword id="KW-0597">Phosphoprotein</keyword>
<keyword id="KW-0653">Protein transport</keyword>
<keyword id="KW-1185">Reference proteome</keyword>
<keyword id="KW-0813">Transport</keyword>